<keyword id="KW-0002">3D-structure</keyword>
<keyword id="KW-0472">Membrane</keyword>
<keyword id="KW-0496">Mitochondrion</keyword>
<keyword id="KW-0999">Mitochondrion inner membrane</keyword>
<keyword id="KW-1185">Reference proteome</keyword>
<keyword id="KW-1278">Translocase</keyword>
<keyword id="KW-0812">Transmembrane</keyword>
<keyword id="KW-1133">Transmembrane helix</keyword>
<reference key="1">
    <citation type="journal article" date="1982" name="J. Mol. Biol.">
        <title>Complete sequence of bovine mitochondrial DNA. Conserved features of the mammalian mitochondrial genome.</title>
        <authorList>
            <person name="Anderson S."/>
            <person name="de Bruijn M.H.L."/>
            <person name="Coulson A.R."/>
            <person name="Eperon I.C."/>
            <person name="Sanger F."/>
            <person name="Young I.G."/>
        </authorList>
    </citation>
    <scope>NUCLEOTIDE SEQUENCE [GENOMIC DNA]</scope>
    <source>
        <strain evidence="8">Hereford</strain>
        <tissue>Heart</tissue>
    </source>
</reference>
<reference key="2">
    <citation type="submission" date="2002-03" db="EMBL/GenBank/DDBJ databases">
        <title>Bos taurus mitochondrial protein coding regions.</title>
        <authorList>
            <person name="Wettstein P.J."/>
        </authorList>
    </citation>
    <scope>NUCLEOTIDE SEQUENCE [GENOMIC DNA]</scope>
    <source>
        <strain>65</strain>
        <strain>66</strain>
        <strain>D</strain>
        <strain>F</strain>
    </source>
</reference>
<reference key="3">
    <citation type="submission" date="2002-03" db="EMBL/GenBank/DDBJ databases">
        <title>Complete sequence of a new Bos taurus mitochondrial genome.</title>
        <authorList>
            <person name="Hiendleder S."/>
            <person name="Wolf E."/>
        </authorList>
    </citation>
    <scope>NUCLEOTIDE SEQUENCE [GENOMIC DNA]</scope>
    <source>
        <tissue>Liver</tissue>
    </source>
</reference>
<reference key="4">
    <citation type="journal article" date="2016" name="J. Biol. Chem.">
        <title>Purification of active respiratory supercomplex from bovine heart mitochondria enables functional studies.</title>
        <authorList>
            <person name="Shinzawa-Itoh K."/>
            <person name="Shimomura H."/>
            <person name="Yanagisawa S."/>
            <person name="Shimada S."/>
            <person name="Takahashi R."/>
            <person name="Oosaki M."/>
            <person name="Ogura T."/>
            <person name="Tsukihara T."/>
        </authorList>
    </citation>
    <scope>SUBUNIT</scope>
</reference>
<reference key="5">
    <citation type="journal article" date="1996" name="Science">
        <title>The whole structure of the 13-subunit oxidized cytochrome c oxidase at 2.8 A.</title>
        <authorList>
            <person name="Tsukihara T."/>
            <person name="Aoyama H."/>
            <person name="Yamashita E."/>
            <person name="Tomizaki T."/>
            <person name="Yamaguchi H."/>
            <person name="Shinzawa-Itoh K."/>
            <person name="Nakashima R."/>
            <person name="Yaono R."/>
            <person name="Yoshikawa S."/>
        </authorList>
    </citation>
    <scope>X-RAY CRYSTALLOGRAPHY (2.8 ANGSTROMS)</scope>
</reference>
<reference key="6">
    <citation type="journal article" date="1999" name="Acta Crystallogr. D">
        <title>Structure analysis of bovine heart cytochrome c oxidase at 2.8 A resolution.</title>
        <authorList>
            <person name="Tomizaki T."/>
            <person name="Yamashita E."/>
            <person name="Yamaguchi H."/>
            <person name="Aoyama H."/>
            <person name="Tsukihara T."/>
            <person name="Shinzawa-Itoh K."/>
            <person name="Nakashima R."/>
            <person name="Yaono R."/>
            <person name="Yoshikawa S."/>
        </authorList>
    </citation>
    <scope>X-RAY CRYSTALLOGRAPHY (2.8 ANGSTROMS)</scope>
    <source>
        <tissue>Heart</tissue>
    </source>
</reference>
<reference key="7">
    <citation type="journal article" date="2000" name="Acta Crystallogr. D">
        <title>X-ray structure of azide-bound fully oxidized cytochrome c oxidase from bovine heart at 2.9 A resolution.</title>
        <authorList>
            <person name="Fei M.J."/>
            <person name="Yamashita E."/>
            <person name="Inoue N."/>
            <person name="Yao M."/>
            <person name="Yamaguchi H."/>
            <person name="Tsukihara T."/>
            <person name="Shinzawa-Itoh K."/>
            <person name="Nakashima R."/>
            <person name="Yoshikawa S."/>
        </authorList>
    </citation>
    <scope>X-RAY CRYSTALLOGRAPHY (2.9 ANGSTROMS)</scope>
    <source>
        <tissue>Heart</tissue>
    </source>
</reference>
<reference key="8">
    <citation type="journal article" date="2010" name="Proc. Natl. Acad. Sci. U.S.A.">
        <title>Bovine cytochrome c oxidase structures enable O2 reduction with minimization of reactive oxygens and provide a proton-pumping gate.</title>
        <authorList>
            <person name="Muramoto K."/>
            <person name="Ohta K."/>
            <person name="Shinzawa-Itoh K."/>
            <person name="Kanda K."/>
            <person name="Taniguchi M."/>
            <person name="Nabekura H."/>
            <person name="Yamashita E."/>
            <person name="Tsukihara T."/>
            <person name="Yoshikawa S."/>
        </authorList>
    </citation>
    <scope>X-RAY CRYSTALLOGRAPHY (1.80 ANGSTROMS)</scope>
</reference>
<reference key="9">
    <citation type="journal article" date="2016" name="Elife">
        <title>Functional asymmetry and electron flow in the bovine respirasome.</title>
        <authorList>
            <person name="Sousa J.S."/>
            <person name="Mills D.J."/>
            <person name="Vonck J."/>
            <person name="Kuehlbrandt W."/>
        </authorList>
    </citation>
    <scope>STRUCTURE BY ELECTRON MICROSCOPY (9.10 ANGSTROMS)</scope>
</reference>
<reference key="10">
    <citation type="journal article" date="2016" name="J. Biol. Chem.">
        <title>The Mg2+-containing water cluster of mammalian cytochrome c oxidase collects four pumping proton equivalents in each catalytic cycle.</title>
        <authorList>
            <person name="Yano N."/>
            <person name="Muramoto K."/>
            <person name="Shimada A."/>
            <person name="Takemura S."/>
            <person name="Baba J."/>
            <person name="Fujisawa H."/>
            <person name="Mochizuki M."/>
            <person name="Shinzawa-Itoh K."/>
            <person name="Yamashita E."/>
            <person name="Tsukihara T."/>
            <person name="Yoshikawa S."/>
        </authorList>
    </citation>
    <scope>X-RAY CRYSTALLOGRAPHY (1.50 ANGSTROMS)</scope>
</reference>
<reference key="11">
    <citation type="journal article" date="2019" name="Proc. Natl. Acad. Sci. U.S.A.">
        <title>Monomeric structure of an active form of bovine cytochrome c oxidase.</title>
        <authorList>
            <person name="Shinzawa-Itoh K."/>
            <person name="Sugimura T."/>
            <person name="Misaki T."/>
            <person name="Tadehara Y."/>
            <person name="Yamamoto S."/>
            <person name="Hanada M."/>
            <person name="Yano N."/>
            <person name="Nakagawa T."/>
            <person name="Uene S."/>
            <person name="Yamada T."/>
            <person name="Aoyama H."/>
            <person name="Yamashita E."/>
            <person name="Tsukihara T."/>
            <person name="Yoshikawa S."/>
            <person name="Muramoto K."/>
        </authorList>
    </citation>
    <scope>X-RAY CRYSTALLOGRAPHY (1.85 ANGSTROMS)</scope>
</reference>
<geneLocation type="mitochondrion"/>
<evidence type="ECO:0000250" key="1">
    <source>
        <dbReference type="UniProtKB" id="P00420"/>
    </source>
</evidence>
<evidence type="ECO:0000269" key="2">
    <source>
    </source>
</evidence>
<evidence type="ECO:0000269" key="3">
    <source>
    </source>
</evidence>
<evidence type="ECO:0000269" key="4">
    <source>
    </source>
</evidence>
<evidence type="ECO:0000269" key="5">
    <source>
    </source>
</evidence>
<evidence type="ECO:0000269" key="6">
    <source>
    </source>
</evidence>
<evidence type="ECO:0000305" key="7"/>
<evidence type="ECO:0000312" key="8">
    <source>
        <dbReference type="Proteomes" id="UP000009136"/>
    </source>
</evidence>
<evidence type="ECO:0007829" key="9">
    <source>
        <dbReference type="PDB" id="3AG1"/>
    </source>
</evidence>
<evidence type="ECO:0007829" key="10">
    <source>
        <dbReference type="PDB" id="5X19"/>
    </source>
</evidence>
<evidence type="ECO:0007829" key="11">
    <source>
        <dbReference type="PDB" id="7COH"/>
    </source>
</evidence>
<accession>P00415</accession>
<accession>Q576A5</accession>
<accession>Q8SE13</accession>
<gene>
    <name type="primary">MT-CO3</name>
    <name type="synonym">COIII</name>
    <name type="synonym">COXIII</name>
    <name type="synonym">MTCO3</name>
</gene>
<dbReference type="EC" id="7.1.1.9"/>
<dbReference type="EMBL" id="V00654">
    <property type="protein sequence ID" value="CAA24003.1"/>
    <property type="status" value="ALT_SEQ"/>
    <property type="molecule type" value="Genomic_DNA"/>
</dbReference>
<dbReference type="EMBL" id="AF490528">
    <property type="protein sequence ID" value="AAM08332.1"/>
    <property type="status" value="ALT_SEQ"/>
    <property type="molecule type" value="Genomic_DNA"/>
</dbReference>
<dbReference type="EMBL" id="AF490529">
    <property type="protein sequence ID" value="AAM08345.1"/>
    <property type="status" value="ALT_SEQ"/>
    <property type="molecule type" value="Genomic_DNA"/>
</dbReference>
<dbReference type="EMBL" id="AF493541">
    <property type="protein sequence ID" value="AAM12795.1"/>
    <property type="status" value="ALT_SEQ"/>
    <property type="molecule type" value="Genomic_DNA"/>
</dbReference>
<dbReference type="EMBL" id="AF493542">
    <property type="protein sequence ID" value="AAM12808.1"/>
    <property type="status" value="ALT_SEQ"/>
    <property type="molecule type" value="Genomic_DNA"/>
</dbReference>
<dbReference type="EMBL" id="AF492351">
    <property type="protein sequence ID" value="AAQ06599.1"/>
    <property type="molecule type" value="Genomic_DNA"/>
</dbReference>
<dbReference type="PIR" id="A00483">
    <property type="entry name" value="OTBO3"/>
</dbReference>
<dbReference type="PDB" id="1OCC">
    <property type="method" value="X-ray"/>
    <property type="resolution" value="2.80 A"/>
    <property type="chains" value="C/P=1-261"/>
</dbReference>
<dbReference type="PDB" id="1OCO">
    <property type="method" value="X-ray"/>
    <property type="resolution" value="2.80 A"/>
    <property type="chains" value="C/P=1-261"/>
</dbReference>
<dbReference type="PDB" id="1OCR">
    <property type="method" value="X-ray"/>
    <property type="resolution" value="2.35 A"/>
    <property type="chains" value="C/P=1-261"/>
</dbReference>
<dbReference type="PDB" id="1OCZ">
    <property type="method" value="X-ray"/>
    <property type="resolution" value="2.90 A"/>
    <property type="chains" value="C/P=1-261"/>
</dbReference>
<dbReference type="PDB" id="1V54">
    <property type="method" value="X-ray"/>
    <property type="resolution" value="1.80 A"/>
    <property type="chains" value="C/P=1-261"/>
</dbReference>
<dbReference type="PDB" id="1V55">
    <property type="method" value="X-ray"/>
    <property type="resolution" value="1.90 A"/>
    <property type="chains" value="C/P=1-261"/>
</dbReference>
<dbReference type="PDB" id="2DYR">
    <property type="method" value="X-ray"/>
    <property type="resolution" value="1.80 A"/>
    <property type="chains" value="C/P=1-261"/>
</dbReference>
<dbReference type="PDB" id="2DYS">
    <property type="method" value="X-ray"/>
    <property type="resolution" value="2.20 A"/>
    <property type="chains" value="C/P=1-261"/>
</dbReference>
<dbReference type="PDB" id="2EIJ">
    <property type="method" value="X-ray"/>
    <property type="resolution" value="1.90 A"/>
    <property type="chains" value="C/P=1-261"/>
</dbReference>
<dbReference type="PDB" id="2EIK">
    <property type="method" value="X-ray"/>
    <property type="resolution" value="2.10 A"/>
    <property type="chains" value="C/P=1-261"/>
</dbReference>
<dbReference type="PDB" id="2EIL">
    <property type="method" value="X-ray"/>
    <property type="resolution" value="2.10 A"/>
    <property type="chains" value="C/P=1-261"/>
</dbReference>
<dbReference type="PDB" id="2EIM">
    <property type="method" value="X-ray"/>
    <property type="resolution" value="2.60 A"/>
    <property type="chains" value="C/P=1-261"/>
</dbReference>
<dbReference type="PDB" id="2EIN">
    <property type="method" value="X-ray"/>
    <property type="resolution" value="2.70 A"/>
    <property type="chains" value="C/P=1-261"/>
</dbReference>
<dbReference type="PDB" id="2OCC">
    <property type="method" value="X-ray"/>
    <property type="resolution" value="2.30 A"/>
    <property type="chains" value="C/P=1-261"/>
</dbReference>
<dbReference type="PDB" id="2Y69">
    <property type="method" value="X-ray"/>
    <property type="resolution" value="1.95 A"/>
    <property type="chains" value="C/P=1-261"/>
</dbReference>
<dbReference type="PDB" id="2YBB">
    <property type="method" value="EM"/>
    <property type="resolution" value="19.00 A"/>
    <property type="chains" value="N=1-261"/>
</dbReference>
<dbReference type="PDB" id="2ZXW">
    <property type="method" value="X-ray"/>
    <property type="resolution" value="2.50 A"/>
    <property type="chains" value="C/P=1-261"/>
</dbReference>
<dbReference type="PDB" id="3ABK">
    <property type="method" value="X-ray"/>
    <property type="resolution" value="2.00 A"/>
    <property type="chains" value="C/P=1-261"/>
</dbReference>
<dbReference type="PDB" id="3ABL">
    <property type="method" value="X-ray"/>
    <property type="resolution" value="2.10 A"/>
    <property type="chains" value="C/P=1-261"/>
</dbReference>
<dbReference type="PDB" id="3ABM">
    <property type="method" value="X-ray"/>
    <property type="resolution" value="1.95 A"/>
    <property type="chains" value="C/P=1-261"/>
</dbReference>
<dbReference type="PDB" id="3AG1">
    <property type="method" value="X-ray"/>
    <property type="resolution" value="2.20 A"/>
    <property type="chains" value="C/P=1-261"/>
</dbReference>
<dbReference type="PDB" id="3AG2">
    <property type="method" value="X-ray"/>
    <property type="resolution" value="1.80 A"/>
    <property type="chains" value="C/P=1-261"/>
</dbReference>
<dbReference type="PDB" id="3AG3">
    <property type="method" value="X-ray"/>
    <property type="resolution" value="1.80 A"/>
    <property type="chains" value="C/P=1-261"/>
</dbReference>
<dbReference type="PDB" id="3AG4">
    <property type="method" value="X-ray"/>
    <property type="resolution" value="2.05 A"/>
    <property type="chains" value="C/P=1-261"/>
</dbReference>
<dbReference type="PDB" id="3ASN">
    <property type="method" value="X-ray"/>
    <property type="resolution" value="3.00 A"/>
    <property type="chains" value="C/P=1-261"/>
</dbReference>
<dbReference type="PDB" id="3ASO">
    <property type="method" value="X-ray"/>
    <property type="resolution" value="2.30 A"/>
    <property type="chains" value="C/P=1-261"/>
</dbReference>
<dbReference type="PDB" id="3WG7">
    <property type="method" value="X-ray"/>
    <property type="resolution" value="1.90 A"/>
    <property type="chains" value="C/P=1-261"/>
</dbReference>
<dbReference type="PDB" id="3X2Q">
    <property type="method" value="X-ray"/>
    <property type="resolution" value="2.00 A"/>
    <property type="chains" value="C/P=1-261"/>
</dbReference>
<dbReference type="PDB" id="5B1A">
    <property type="method" value="X-ray"/>
    <property type="resolution" value="1.50 A"/>
    <property type="chains" value="C/P=1-261"/>
</dbReference>
<dbReference type="PDB" id="5B1B">
    <property type="method" value="X-ray"/>
    <property type="resolution" value="1.60 A"/>
    <property type="chains" value="C/P=1-261"/>
</dbReference>
<dbReference type="PDB" id="5B3S">
    <property type="method" value="X-ray"/>
    <property type="resolution" value="1.68 A"/>
    <property type="chains" value="C/P=1-261"/>
</dbReference>
<dbReference type="PDB" id="5IY5">
    <property type="method" value="X-ray"/>
    <property type="resolution" value="2.00 A"/>
    <property type="chains" value="C/P=3-261"/>
</dbReference>
<dbReference type="PDB" id="5LUF">
    <property type="method" value="EM"/>
    <property type="resolution" value="9.10 A"/>
    <property type="chains" value="z=1-261"/>
</dbReference>
<dbReference type="PDB" id="5W97">
    <property type="method" value="X-ray"/>
    <property type="resolution" value="2.30 A"/>
    <property type="chains" value="C/c=1-261"/>
</dbReference>
<dbReference type="PDB" id="5WAU">
    <property type="method" value="X-ray"/>
    <property type="resolution" value="1.95 A"/>
    <property type="chains" value="C/c=1-261"/>
</dbReference>
<dbReference type="PDB" id="5X19">
    <property type="method" value="X-ray"/>
    <property type="resolution" value="2.20 A"/>
    <property type="chains" value="C/P=1-261"/>
</dbReference>
<dbReference type="PDB" id="5X1B">
    <property type="method" value="X-ray"/>
    <property type="resolution" value="2.40 A"/>
    <property type="chains" value="C/P=1-261"/>
</dbReference>
<dbReference type="PDB" id="5X1F">
    <property type="method" value="X-ray"/>
    <property type="resolution" value="2.20 A"/>
    <property type="chains" value="C/P=1-261"/>
</dbReference>
<dbReference type="PDB" id="5XDQ">
    <property type="method" value="X-ray"/>
    <property type="resolution" value="1.77 A"/>
    <property type="chains" value="C/P=1-261"/>
</dbReference>
<dbReference type="PDB" id="5XDX">
    <property type="method" value="X-ray"/>
    <property type="resolution" value="1.99 A"/>
    <property type="chains" value="C/P=2-261"/>
</dbReference>
<dbReference type="PDB" id="5XTH">
    <property type="method" value="EM"/>
    <property type="resolution" value="3.90 A"/>
    <property type="chains" value="z=1-261"/>
</dbReference>
<dbReference type="PDB" id="5XTI">
    <property type="method" value="EM"/>
    <property type="resolution" value="17.40 A"/>
    <property type="chains" value="Bz/z=1-261"/>
</dbReference>
<dbReference type="PDB" id="5Z84">
    <property type="method" value="X-ray"/>
    <property type="resolution" value="1.85 A"/>
    <property type="chains" value="C/P=1-261"/>
</dbReference>
<dbReference type="PDB" id="5Z85">
    <property type="method" value="X-ray"/>
    <property type="resolution" value="1.85 A"/>
    <property type="chains" value="C/P=1-261"/>
</dbReference>
<dbReference type="PDB" id="5Z86">
    <property type="method" value="X-ray"/>
    <property type="resolution" value="1.85 A"/>
    <property type="chains" value="C/P=1-261"/>
</dbReference>
<dbReference type="PDB" id="5ZCO">
    <property type="method" value="X-ray"/>
    <property type="resolution" value="1.90 A"/>
    <property type="chains" value="C/P=1-261"/>
</dbReference>
<dbReference type="PDB" id="5ZCP">
    <property type="method" value="X-ray"/>
    <property type="resolution" value="1.65 A"/>
    <property type="chains" value="C/P=1-261"/>
</dbReference>
<dbReference type="PDB" id="5ZCQ">
    <property type="method" value="X-ray"/>
    <property type="resolution" value="1.65 A"/>
    <property type="chains" value="C/P=1-261"/>
</dbReference>
<dbReference type="PDB" id="6J8M">
    <property type="method" value="X-ray"/>
    <property type="resolution" value="1.90 A"/>
    <property type="chains" value="C/P=1-261"/>
</dbReference>
<dbReference type="PDB" id="6JUW">
    <property type="method" value="X-ray"/>
    <property type="resolution" value="1.80 A"/>
    <property type="chains" value="C/P=3-261"/>
</dbReference>
<dbReference type="PDB" id="6JY3">
    <property type="method" value="X-ray"/>
    <property type="resolution" value="1.85 A"/>
    <property type="chains" value="C=1-261"/>
</dbReference>
<dbReference type="PDB" id="6JY4">
    <property type="method" value="X-ray"/>
    <property type="resolution" value="1.95 A"/>
    <property type="chains" value="C=1-261"/>
</dbReference>
<dbReference type="PDB" id="6NKN">
    <property type="method" value="X-ray"/>
    <property type="resolution" value="2.50 A"/>
    <property type="chains" value="C/P=1-261"/>
</dbReference>
<dbReference type="PDB" id="6NMF">
    <property type="method" value="X-ray"/>
    <property type="resolution" value="2.80 A"/>
    <property type="chains" value="C/P=1-261"/>
</dbReference>
<dbReference type="PDB" id="6NMP">
    <property type="method" value="X-ray"/>
    <property type="resolution" value="2.90 A"/>
    <property type="chains" value="C/P=1-261"/>
</dbReference>
<dbReference type="PDB" id="7COH">
    <property type="method" value="X-ray"/>
    <property type="resolution" value="1.30 A"/>
    <property type="chains" value="C/P=1-261"/>
</dbReference>
<dbReference type="PDB" id="7CP5">
    <property type="method" value="X-ray"/>
    <property type="resolution" value="1.76 A"/>
    <property type="chains" value="C/P=3-261"/>
</dbReference>
<dbReference type="PDB" id="7D5W">
    <property type="method" value="X-ray"/>
    <property type="resolution" value="1.84 A"/>
    <property type="chains" value="C/P=3-261"/>
</dbReference>
<dbReference type="PDB" id="7D5X">
    <property type="method" value="X-ray"/>
    <property type="resolution" value="1.74 A"/>
    <property type="chains" value="C/P=3-261"/>
</dbReference>
<dbReference type="PDB" id="7DGQ">
    <property type="method" value="EM"/>
    <property type="resolution" value="5.00 A"/>
    <property type="chains" value="A9=1-261"/>
</dbReference>
<dbReference type="PDB" id="7DGR">
    <property type="method" value="EM"/>
    <property type="resolution" value="4.60 A"/>
    <property type="chains" value="C2=1-261"/>
</dbReference>
<dbReference type="PDB" id="7DGS">
    <property type="method" value="EM"/>
    <property type="resolution" value="7.80 A"/>
    <property type="chains" value="B7=1-261"/>
</dbReference>
<dbReference type="PDB" id="7DKF">
    <property type="method" value="EM"/>
    <property type="resolution" value="8.30 A"/>
    <property type="chains" value="C3=1-261"/>
</dbReference>
<dbReference type="PDB" id="7EV7">
    <property type="method" value="X-ray"/>
    <property type="resolution" value="1.70 A"/>
    <property type="chains" value="C/P=1-261"/>
</dbReference>
<dbReference type="PDB" id="7THU">
    <property type="method" value="X-ray"/>
    <property type="resolution" value="1.93 A"/>
    <property type="chains" value="CCC/PPP=1-261"/>
</dbReference>
<dbReference type="PDB" id="7TIE">
    <property type="method" value="X-ray"/>
    <property type="resolution" value="1.90 A"/>
    <property type="chains" value="CCC/PPP=1-261"/>
</dbReference>
<dbReference type="PDB" id="7TIH">
    <property type="method" value="X-ray"/>
    <property type="resolution" value="2.35 A"/>
    <property type="chains" value="CCC/PPP=1-261"/>
</dbReference>
<dbReference type="PDB" id="7TII">
    <property type="method" value="X-ray"/>
    <property type="resolution" value="2.45 A"/>
    <property type="chains" value="CCC/PPP=1-261"/>
</dbReference>
<dbReference type="PDB" id="7VUW">
    <property type="method" value="X-ray"/>
    <property type="resolution" value="1.60 A"/>
    <property type="chains" value="C/P=3-261"/>
</dbReference>
<dbReference type="PDB" id="7VVR">
    <property type="method" value="X-ray"/>
    <property type="resolution" value="1.65 A"/>
    <property type="chains" value="C/P=3-261"/>
</dbReference>
<dbReference type="PDB" id="7W3E">
    <property type="method" value="X-ray"/>
    <property type="resolution" value="1.45 A"/>
    <property type="chains" value="C/P=3-261"/>
</dbReference>
<dbReference type="PDB" id="7XMA">
    <property type="method" value="X-ray"/>
    <property type="resolution" value="2.20 A"/>
    <property type="chains" value="C/P=1-261"/>
</dbReference>
<dbReference type="PDB" id="7XMB">
    <property type="method" value="X-ray"/>
    <property type="resolution" value="2.20 A"/>
    <property type="chains" value="C/P=1-261"/>
</dbReference>
<dbReference type="PDB" id="7Y44">
    <property type="method" value="X-ray"/>
    <property type="resolution" value="1.90 A"/>
    <property type="chains" value="C/P=1-261"/>
</dbReference>
<dbReference type="PDB" id="7YPY">
    <property type="method" value="X-ray"/>
    <property type="resolution" value="1.50 A"/>
    <property type="chains" value="C/P=1-261"/>
</dbReference>
<dbReference type="PDB" id="8D4T">
    <property type="method" value="EM"/>
    <property type="resolution" value="3.10 A"/>
    <property type="chains" value="P=4-261"/>
</dbReference>
<dbReference type="PDB" id="8GBT">
    <property type="method" value="X-ray"/>
    <property type="resolution" value="2.80 A"/>
    <property type="chains" value="C/P=1-261"/>
</dbReference>
<dbReference type="PDB" id="8GCQ">
    <property type="method" value="X-ray"/>
    <property type="resolution" value="2.38 A"/>
    <property type="chains" value="C/P=1-261"/>
</dbReference>
<dbReference type="PDB" id="8GVM">
    <property type="method" value="X-ray"/>
    <property type="resolution" value="1.85 A"/>
    <property type="chains" value="C/P=1-261"/>
</dbReference>
<dbReference type="PDB" id="8H8R">
    <property type="method" value="X-ray"/>
    <property type="resolution" value="1.70 A"/>
    <property type="chains" value="C/P=1-261"/>
</dbReference>
<dbReference type="PDB" id="8H8S">
    <property type="method" value="X-ray"/>
    <property type="resolution" value="1.70 A"/>
    <property type="chains" value="C/P=1-261"/>
</dbReference>
<dbReference type="PDB" id="8IJN">
    <property type="method" value="X-ray"/>
    <property type="resolution" value="1.80 A"/>
    <property type="chains" value="C/P=1-261"/>
</dbReference>
<dbReference type="PDBsum" id="1OCC"/>
<dbReference type="PDBsum" id="1OCO"/>
<dbReference type="PDBsum" id="1OCR"/>
<dbReference type="PDBsum" id="1OCZ"/>
<dbReference type="PDBsum" id="1V54"/>
<dbReference type="PDBsum" id="1V55"/>
<dbReference type="PDBsum" id="2DYR"/>
<dbReference type="PDBsum" id="2DYS"/>
<dbReference type="PDBsum" id="2EIJ"/>
<dbReference type="PDBsum" id="2EIK"/>
<dbReference type="PDBsum" id="2EIL"/>
<dbReference type="PDBsum" id="2EIM"/>
<dbReference type="PDBsum" id="2EIN"/>
<dbReference type="PDBsum" id="2OCC"/>
<dbReference type="PDBsum" id="2Y69"/>
<dbReference type="PDBsum" id="2YBB"/>
<dbReference type="PDBsum" id="2ZXW"/>
<dbReference type="PDBsum" id="3ABK"/>
<dbReference type="PDBsum" id="3ABL"/>
<dbReference type="PDBsum" id="3ABM"/>
<dbReference type="PDBsum" id="3AG1"/>
<dbReference type="PDBsum" id="3AG2"/>
<dbReference type="PDBsum" id="3AG3"/>
<dbReference type="PDBsum" id="3AG4"/>
<dbReference type="PDBsum" id="3ASN"/>
<dbReference type="PDBsum" id="3ASO"/>
<dbReference type="PDBsum" id="3WG7"/>
<dbReference type="PDBsum" id="3X2Q"/>
<dbReference type="PDBsum" id="5B1A"/>
<dbReference type="PDBsum" id="5B1B"/>
<dbReference type="PDBsum" id="5B3S"/>
<dbReference type="PDBsum" id="5IY5"/>
<dbReference type="PDBsum" id="5LUF"/>
<dbReference type="PDBsum" id="5W97"/>
<dbReference type="PDBsum" id="5WAU"/>
<dbReference type="PDBsum" id="5X19"/>
<dbReference type="PDBsum" id="5X1B"/>
<dbReference type="PDBsum" id="5X1F"/>
<dbReference type="PDBsum" id="5XDQ"/>
<dbReference type="PDBsum" id="5XDX"/>
<dbReference type="PDBsum" id="5XTH"/>
<dbReference type="PDBsum" id="5XTI"/>
<dbReference type="PDBsum" id="5Z84"/>
<dbReference type="PDBsum" id="5Z85"/>
<dbReference type="PDBsum" id="5Z86"/>
<dbReference type="PDBsum" id="5ZCO"/>
<dbReference type="PDBsum" id="5ZCP"/>
<dbReference type="PDBsum" id="5ZCQ"/>
<dbReference type="PDBsum" id="6J8M"/>
<dbReference type="PDBsum" id="6JUW"/>
<dbReference type="PDBsum" id="6JY3"/>
<dbReference type="PDBsum" id="6JY4"/>
<dbReference type="PDBsum" id="6NKN"/>
<dbReference type="PDBsum" id="6NMF"/>
<dbReference type="PDBsum" id="6NMP"/>
<dbReference type="PDBsum" id="7COH"/>
<dbReference type="PDBsum" id="7CP5"/>
<dbReference type="PDBsum" id="7D5W"/>
<dbReference type="PDBsum" id="7D5X"/>
<dbReference type="PDBsum" id="7DGQ"/>
<dbReference type="PDBsum" id="7DGR"/>
<dbReference type="PDBsum" id="7DGS"/>
<dbReference type="PDBsum" id="7DKF"/>
<dbReference type="PDBsum" id="7EV7"/>
<dbReference type="PDBsum" id="7THU"/>
<dbReference type="PDBsum" id="7TIE"/>
<dbReference type="PDBsum" id="7TIH"/>
<dbReference type="PDBsum" id="7TII"/>
<dbReference type="PDBsum" id="7VUW"/>
<dbReference type="PDBsum" id="7VVR"/>
<dbReference type="PDBsum" id="7W3E"/>
<dbReference type="PDBsum" id="7XMA"/>
<dbReference type="PDBsum" id="7XMB"/>
<dbReference type="PDBsum" id="7Y44"/>
<dbReference type="PDBsum" id="7YPY"/>
<dbReference type="PDBsum" id="8D4T"/>
<dbReference type="PDBsum" id="8GBT"/>
<dbReference type="PDBsum" id="8GCQ"/>
<dbReference type="PDBsum" id="8GVM"/>
<dbReference type="PDBsum" id="8H8R"/>
<dbReference type="PDBsum" id="8H8S"/>
<dbReference type="PDBsum" id="8IJN"/>
<dbReference type="EMDB" id="EMD-27196"/>
<dbReference type="EMDB" id="EMD-30673"/>
<dbReference type="EMDB" id="EMD-30674"/>
<dbReference type="EMDB" id="EMD-30675"/>
<dbReference type="EMDB" id="EMD-30706"/>
<dbReference type="EMDB" id="EMD-4107"/>
<dbReference type="SMR" id="P00415"/>
<dbReference type="CORUM" id="P00415"/>
<dbReference type="DIP" id="DIP-60938N"/>
<dbReference type="FunCoup" id="P00415">
    <property type="interactions" value="183"/>
</dbReference>
<dbReference type="IntAct" id="P00415">
    <property type="interactions" value="1"/>
</dbReference>
<dbReference type="STRING" id="9913.ENSBTAP00000053157"/>
<dbReference type="TCDB" id="3.D.4.7.1">
    <property type="family name" value="the proton-translocating cytochrome oxidase (cox) superfamily"/>
</dbReference>
<dbReference type="PaxDb" id="9913-ENSBTAP00000053157"/>
<dbReference type="eggNOG" id="KOG4664">
    <property type="taxonomic scope" value="Eukaryota"/>
</dbReference>
<dbReference type="HOGENOM" id="CLU_044071_0_0_1"/>
<dbReference type="InParanoid" id="P00415"/>
<dbReference type="BRENDA" id="7.1.1.9">
    <property type="organism ID" value="908"/>
</dbReference>
<dbReference type="EvolutionaryTrace" id="P00415"/>
<dbReference type="Proteomes" id="UP000009136">
    <property type="component" value="Mitochondrion MT"/>
</dbReference>
<dbReference type="Proteomes" id="UP000009136">
    <property type="component" value="Unassembled WGS sequence"/>
</dbReference>
<dbReference type="GO" id="GO:0005743">
    <property type="term" value="C:mitochondrial inner membrane"/>
    <property type="evidence" value="ECO:0007669"/>
    <property type="project" value="UniProtKB-SubCell"/>
</dbReference>
<dbReference type="GO" id="GO:0005739">
    <property type="term" value="C:mitochondrion"/>
    <property type="evidence" value="ECO:0000318"/>
    <property type="project" value="GO_Central"/>
</dbReference>
<dbReference type="GO" id="GO:0045277">
    <property type="term" value="C:respiratory chain complex IV"/>
    <property type="evidence" value="ECO:0000314"/>
    <property type="project" value="UniProtKB"/>
</dbReference>
<dbReference type="GO" id="GO:0004129">
    <property type="term" value="F:cytochrome-c oxidase activity"/>
    <property type="evidence" value="ECO:0007669"/>
    <property type="project" value="UniProtKB-EC"/>
</dbReference>
<dbReference type="GO" id="GO:0006123">
    <property type="term" value="P:mitochondrial electron transport, cytochrome c to oxygen"/>
    <property type="evidence" value="ECO:0000318"/>
    <property type="project" value="GO_Central"/>
</dbReference>
<dbReference type="GO" id="GO:0008535">
    <property type="term" value="P:respiratory chain complex IV assembly"/>
    <property type="evidence" value="ECO:0000250"/>
    <property type="project" value="UniProtKB"/>
</dbReference>
<dbReference type="CDD" id="cd01665">
    <property type="entry name" value="Cyt_c_Oxidase_III"/>
    <property type="match status" value="1"/>
</dbReference>
<dbReference type="FunFam" id="1.10.287.70:FF:000048">
    <property type="entry name" value="Cytochrome c oxidase subunit 3"/>
    <property type="match status" value="1"/>
</dbReference>
<dbReference type="FunFam" id="1.20.120.80:FF:000002">
    <property type="entry name" value="Cytochrome c oxidase subunit 3"/>
    <property type="match status" value="1"/>
</dbReference>
<dbReference type="Gene3D" id="1.10.287.70">
    <property type="match status" value="1"/>
</dbReference>
<dbReference type="Gene3D" id="1.20.120.80">
    <property type="entry name" value="Cytochrome c oxidase, subunit III, four-helix bundle"/>
    <property type="match status" value="1"/>
</dbReference>
<dbReference type="InterPro" id="IPR024791">
    <property type="entry name" value="Cyt_c/ubiquinol_Oxase_su3"/>
</dbReference>
<dbReference type="InterPro" id="IPR033945">
    <property type="entry name" value="Cyt_c_oxase_su3_dom"/>
</dbReference>
<dbReference type="InterPro" id="IPR000298">
    <property type="entry name" value="Cyt_c_oxidase-like_su3"/>
</dbReference>
<dbReference type="InterPro" id="IPR035973">
    <property type="entry name" value="Cyt_c_oxidase_su3-like_sf"/>
</dbReference>
<dbReference type="InterPro" id="IPR013833">
    <property type="entry name" value="Cyt_c_oxidase_su3_a-hlx"/>
</dbReference>
<dbReference type="PANTHER" id="PTHR11403:SF7">
    <property type="entry name" value="CYTOCHROME C OXIDASE SUBUNIT 3"/>
    <property type="match status" value="1"/>
</dbReference>
<dbReference type="PANTHER" id="PTHR11403">
    <property type="entry name" value="CYTOCHROME C OXIDASE SUBUNIT III"/>
    <property type="match status" value="1"/>
</dbReference>
<dbReference type="Pfam" id="PF00510">
    <property type="entry name" value="COX3"/>
    <property type="match status" value="1"/>
</dbReference>
<dbReference type="SUPFAM" id="SSF81452">
    <property type="entry name" value="Cytochrome c oxidase subunit III-like"/>
    <property type="match status" value="1"/>
</dbReference>
<dbReference type="PROSITE" id="PS50253">
    <property type="entry name" value="COX3"/>
    <property type="match status" value="1"/>
</dbReference>
<feature type="chain" id="PRO_0000183746" description="Cytochrome c oxidase subunit 3">
    <location>
        <begin position="1"/>
        <end position="261"/>
    </location>
</feature>
<feature type="topological domain" description="Mitochondrial matrix" evidence="3">
    <location>
        <begin position="1"/>
        <end position="15"/>
    </location>
</feature>
<feature type="transmembrane region" description="Helical; Name=I" evidence="3">
    <location>
        <begin position="16"/>
        <end position="34"/>
    </location>
</feature>
<feature type="topological domain" description="Mitochondrial intermembrane" evidence="3">
    <location>
        <begin position="35"/>
        <end position="40"/>
    </location>
</feature>
<feature type="transmembrane region" description="Helical; Name=II" evidence="3">
    <location>
        <begin position="41"/>
        <end position="66"/>
    </location>
</feature>
<feature type="topological domain" description="Mitochondrial matrix" evidence="3">
    <location>
        <begin position="67"/>
        <end position="72"/>
    </location>
</feature>
<feature type="transmembrane region" description="Helical; Name=III" evidence="3">
    <location>
        <begin position="73"/>
        <end position="105"/>
    </location>
</feature>
<feature type="topological domain" description="Mitochondrial intermembrane" evidence="3">
    <location>
        <begin position="106"/>
        <end position="128"/>
    </location>
</feature>
<feature type="transmembrane region" description="Helical; Name=IV" evidence="3">
    <location>
        <begin position="129"/>
        <end position="152"/>
    </location>
</feature>
<feature type="topological domain" description="Mitochondrial matrix" evidence="3">
    <location>
        <begin position="153"/>
        <end position="155"/>
    </location>
</feature>
<feature type="transmembrane region" description="Helical; Name=V" evidence="3">
    <location>
        <begin position="156"/>
        <end position="183"/>
    </location>
</feature>
<feature type="topological domain" description="Mitochondrial intermembrane" evidence="3">
    <location>
        <begin position="184"/>
        <end position="190"/>
    </location>
</feature>
<feature type="transmembrane region" description="Helical; Name=VI" evidence="3">
    <location>
        <begin position="191"/>
        <end position="223"/>
    </location>
</feature>
<feature type="topological domain" description="Mitochondrial matrix" evidence="3">
    <location>
        <begin position="224"/>
        <end position="232"/>
    </location>
</feature>
<feature type="transmembrane region" description="Helical; Name=VII" evidence="3">
    <location>
        <begin position="233"/>
        <end position="256"/>
    </location>
</feature>
<feature type="topological domain" description="Mitochondrial intermembrane" evidence="3">
    <location>
        <begin position="257"/>
        <end position="261"/>
    </location>
</feature>
<feature type="sequence conflict" description="In Ref. 1; CAA24003." evidence="7" ref="1">
    <original>A</original>
    <variation>G</variation>
    <location>
        <position position="238"/>
    </location>
</feature>
<feature type="strand" evidence="9">
    <location>
        <begin position="6"/>
        <end position="8"/>
    </location>
</feature>
<feature type="helix" evidence="11">
    <location>
        <begin position="16"/>
        <end position="37"/>
    </location>
</feature>
<feature type="helix" evidence="11">
    <location>
        <begin position="41"/>
        <end position="65"/>
    </location>
</feature>
<feature type="turn" evidence="11">
    <location>
        <begin position="66"/>
        <end position="68"/>
    </location>
</feature>
<feature type="helix" evidence="11">
    <location>
        <begin position="73"/>
        <end position="106"/>
    </location>
</feature>
<feature type="helix" evidence="11">
    <location>
        <begin position="110"/>
        <end position="112"/>
    </location>
</feature>
<feature type="strand" evidence="11">
    <location>
        <begin position="114"/>
        <end position="117"/>
    </location>
</feature>
<feature type="turn" evidence="10">
    <location>
        <begin position="126"/>
        <end position="128"/>
    </location>
</feature>
<feature type="helix" evidence="11">
    <location>
        <begin position="129"/>
        <end position="152"/>
    </location>
</feature>
<feature type="helix" evidence="11">
    <location>
        <begin position="156"/>
        <end position="183"/>
    </location>
</feature>
<feature type="helix" evidence="11">
    <location>
        <begin position="191"/>
        <end position="223"/>
    </location>
</feature>
<feature type="helix" evidence="11">
    <location>
        <begin position="233"/>
        <end position="255"/>
    </location>
</feature>
<feature type="turn" evidence="11">
    <location>
        <begin position="256"/>
        <end position="260"/>
    </location>
</feature>
<organism>
    <name type="scientific">Bos taurus</name>
    <name type="common">Bovine</name>
    <dbReference type="NCBI Taxonomy" id="9913"/>
    <lineage>
        <taxon>Eukaryota</taxon>
        <taxon>Metazoa</taxon>
        <taxon>Chordata</taxon>
        <taxon>Craniata</taxon>
        <taxon>Vertebrata</taxon>
        <taxon>Euteleostomi</taxon>
        <taxon>Mammalia</taxon>
        <taxon>Eutheria</taxon>
        <taxon>Laurasiatheria</taxon>
        <taxon>Artiodactyla</taxon>
        <taxon>Ruminantia</taxon>
        <taxon>Pecora</taxon>
        <taxon>Bovidae</taxon>
        <taxon>Bovinae</taxon>
        <taxon>Bos</taxon>
    </lineage>
</organism>
<comment type="function">
    <text evidence="1">Component of the cytochrome c oxidase, the last enzyme in the mitochondrial electron transport chain which drives oxidative phosphorylation. The respiratory chain contains 3 multisubunit complexes succinate dehydrogenase (complex II, CII), ubiquinol-cytochrome c oxidoreductase (cytochrome b-c1 complex, complex III, CIII) and cytochrome c oxidase (complex IV, CIV), that cooperate to transfer electrons derived from NADH and succinate to molecular oxygen, creating an electrochemical gradient over the inner membrane that drives transmembrane transport and the ATP synthase. Cytochrome c oxidase is the component of the respiratory chain that catalyzes the reduction of oxygen to water. Electrons originating from reduced cytochrome c in the intermembrane space (IMS) are transferred via the dinuclear copper A center (CU(A)) of subunit 2 and heme A of subunit 1 to the active site in subunit 1, a binuclear center (BNC) formed by heme A3 and copper B (CU(B)). The BNC reduces molecular oxygen to 2 water molecules using 4 electrons from cytochrome c in the IMS and 4 protons from the mitochondrial matrix.</text>
</comment>
<comment type="catalytic activity">
    <reaction evidence="1">
        <text>4 Fe(II)-[cytochrome c] + O2 + 8 H(+)(in) = 4 Fe(III)-[cytochrome c] + 2 H2O + 4 H(+)(out)</text>
        <dbReference type="Rhea" id="RHEA:11436"/>
        <dbReference type="Rhea" id="RHEA-COMP:10350"/>
        <dbReference type="Rhea" id="RHEA-COMP:14399"/>
        <dbReference type="ChEBI" id="CHEBI:15377"/>
        <dbReference type="ChEBI" id="CHEBI:15378"/>
        <dbReference type="ChEBI" id="CHEBI:15379"/>
        <dbReference type="ChEBI" id="CHEBI:29033"/>
        <dbReference type="ChEBI" id="CHEBI:29034"/>
        <dbReference type="EC" id="7.1.1.9"/>
    </reaction>
    <physiologicalReaction direction="left-to-right" evidence="1">
        <dbReference type="Rhea" id="RHEA:11437"/>
    </physiologicalReaction>
</comment>
<comment type="subunit">
    <text evidence="2 4 6">Component of the cytochrome c oxidase (complex IV, CIV), a multisubunit enzyme composed of 14 subunits. The complex is composed of a catalytic core of 3 subunits MT-CO1, MT-CO2 and MT-CO3, encoded in the mitochondrial DNA, and 11 supernumerary subunits COX4I1 (or COX4I2), COX5A, COX5B, COX6A2 (or COX6A1), COX6B1 (or COX6B2), COX6C, COX7A1 (or COX7A2), COX7B, COX7C, COX8B and NDUFA4, which are encoded in the nuclear genome (PubMed:8638158). The complex exists as a monomer or a dimer and forms supercomplexes (SCs) in the inner mitochondrial membrane with NADH-ubiquinone oxidoreductase (complex I, CI) and ubiquinol-cytochrome c oxidoreductase (cytochrome b-c1 complex, complex III, CIII), resulting in different assemblies (supercomplex SCI(1)III(2)IV(1) and megacomplex MCI(2)III(2)IV(2)) (PubMed:26698328, PubMed:27830641).</text>
</comment>
<comment type="subcellular location">
    <subcellularLocation>
        <location evidence="3 5">Mitochondrion inner membrane</location>
        <topology evidence="3 5">Multi-pass membrane protein</topology>
    </subcellularLocation>
</comment>
<comment type="similarity">
    <text evidence="7">Belongs to the cytochrome c oxidase subunit 3 family.</text>
</comment>
<name>COX3_BOVIN</name>
<proteinExistence type="evidence at protein level"/>
<sequence length="261" mass="29933">MTHQTHAYHMVNPSPWPLTGALSALLMTSGLTMWFHFNSMTLLMIGLTTNMLTMYQWWRDVIRESTFQGHHTPAVQKGLRYGMILFIISEVLFFTGFFWAFYHSSLAPTPELGGCWPPTGIHPLNPLEVPLLNTSVLLASGVSITWAHHSLMEGDRKHMLQALFITITLGVYFTLLQASEYYEAPFTISDGVYGSTFFVATGFHGLHVIIGSTFLIVCFFRQLKFHFTSNHHFGFEAAAWYWHFVDVVWLFLYVSIYWWGS</sequence>
<protein>
    <recommendedName>
        <fullName>Cytochrome c oxidase subunit 3</fullName>
        <ecNumber>7.1.1.9</ecNumber>
    </recommendedName>
    <alternativeName>
        <fullName>Cytochrome c oxidase polypeptide III</fullName>
    </alternativeName>
</protein>